<accession>B3SRV4</accession>
<organism>
    <name type="scientific">Rotavirus A (strain RVA/Human/United States/P/1974/G3P1A[8])</name>
    <name type="common">RV-A</name>
    <dbReference type="NCBI Taxonomy" id="10957"/>
    <lineage>
        <taxon>Viruses</taxon>
        <taxon>Riboviria</taxon>
        <taxon>Orthornavirae</taxon>
        <taxon>Duplornaviricota</taxon>
        <taxon>Resentoviricetes</taxon>
        <taxon>Reovirales</taxon>
        <taxon>Sedoreoviridae</taxon>
        <taxon>Rotavirus</taxon>
        <taxon>Rotavirus A</taxon>
    </lineage>
</organism>
<evidence type="ECO:0000255" key="1">
    <source>
        <dbReference type="HAMAP-Rule" id="MF_04089"/>
    </source>
</evidence>
<dbReference type="EC" id="3.6.4.-" evidence="1"/>
<dbReference type="EMBL" id="EF672601">
    <property type="protein sequence ID" value="ABV53279.1"/>
    <property type="molecule type" value="Genomic_RNA"/>
</dbReference>
<dbReference type="SMR" id="B3SRV4"/>
<dbReference type="Proteomes" id="UP000007047">
    <property type="component" value="Genome"/>
</dbReference>
<dbReference type="GO" id="GO:0030430">
    <property type="term" value="C:host cell cytoplasm"/>
    <property type="evidence" value="ECO:0007669"/>
    <property type="project" value="UniProtKB-SubCell"/>
</dbReference>
<dbReference type="GO" id="GO:0005524">
    <property type="term" value="F:ATP binding"/>
    <property type="evidence" value="ECO:0007669"/>
    <property type="project" value="UniProtKB-KW"/>
</dbReference>
<dbReference type="GO" id="GO:0046872">
    <property type="term" value="F:metal ion binding"/>
    <property type="evidence" value="ECO:0007669"/>
    <property type="project" value="UniProtKB-UniRule"/>
</dbReference>
<dbReference type="GO" id="GO:0004550">
    <property type="term" value="F:nucleoside diphosphate kinase activity"/>
    <property type="evidence" value="ECO:0007669"/>
    <property type="project" value="InterPro"/>
</dbReference>
<dbReference type="GO" id="GO:0017111">
    <property type="term" value="F:ribonucleoside triphosphate phosphatase activity"/>
    <property type="evidence" value="ECO:0007669"/>
    <property type="project" value="InterPro"/>
</dbReference>
<dbReference type="GO" id="GO:0003723">
    <property type="term" value="F:RNA binding"/>
    <property type="evidence" value="ECO:0007669"/>
    <property type="project" value="UniProtKB-UniRule"/>
</dbReference>
<dbReference type="GO" id="GO:0019079">
    <property type="term" value="P:viral genome replication"/>
    <property type="evidence" value="ECO:0007669"/>
    <property type="project" value="UniProtKB-UniRule"/>
</dbReference>
<dbReference type="Gene3D" id="3.30.428.20">
    <property type="entry name" value="Rotavirus NSP2 fragment, C-terminal domain"/>
    <property type="match status" value="1"/>
</dbReference>
<dbReference type="Gene3D" id="3.90.1400.10">
    <property type="entry name" value="Rotavirus NSP2 fragment, N-terminal domain"/>
    <property type="match status" value="1"/>
</dbReference>
<dbReference type="HAMAP" id="MF_04089">
    <property type="entry name" value="ROTA_NSP2"/>
    <property type="match status" value="1"/>
</dbReference>
<dbReference type="InterPro" id="IPR048306">
    <property type="entry name" value="Rota_NS35_C"/>
</dbReference>
<dbReference type="InterPro" id="IPR048573">
    <property type="entry name" value="Rota_NS35_N"/>
</dbReference>
<dbReference type="InterPro" id="IPR003668">
    <property type="entry name" value="Rotavirus_NSP2"/>
</dbReference>
<dbReference type="InterPro" id="IPR024076">
    <property type="entry name" value="Rotavirus_NSP2_C"/>
</dbReference>
<dbReference type="InterPro" id="IPR024068">
    <property type="entry name" value="Rotavirus_NSP2_N"/>
</dbReference>
<dbReference type="Pfam" id="PF02509">
    <property type="entry name" value="Rota_NS35_C"/>
    <property type="match status" value="1"/>
</dbReference>
<dbReference type="Pfam" id="PF21067">
    <property type="entry name" value="Rota_NS35_N"/>
    <property type="match status" value="1"/>
</dbReference>
<dbReference type="SUPFAM" id="SSF75347">
    <property type="entry name" value="Rotavirus NSP2 fragment, C-terminal domain"/>
    <property type="match status" value="1"/>
</dbReference>
<dbReference type="SUPFAM" id="SSF75574">
    <property type="entry name" value="Rotavirus NSP2 fragment, N-terminal domain"/>
    <property type="match status" value="1"/>
</dbReference>
<protein>
    <recommendedName>
        <fullName evidence="1">Non-structural protein 2</fullName>
        <shortName evidence="1">NSP2</shortName>
        <ecNumber evidence="1">3.6.4.-</ecNumber>
    </recommendedName>
    <alternativeName>
        <fullName evidence="1">NCVP3</fullName>
    </alternativeName>
    <alternativeName>
        <fullName evidence="1">Non-structural RNA-binding protein 35</fullName>
        <shortName evidence="1">NS35</shortName>
    </alternativeName>
</protein>
<keyword id="KW-0067">ATP-binding</keyword>
<keyword id="KW-1035">Host cytoplasm</keyword>
<keyword id="KW-0378">Hydrolase</keyword>
<keyword id="KW-0460">Magnesium</keyword>
<keyword id="KW-0479">Metal-binding</keyword>
<keyword id="KW-0547">Nucleotide-binding</keyword>
<keyword id="KW-0694">RNA-binding</keyword>
<organismHost>
    <name type="scientific">Homo sapiens</name>
    <name type="common">Human</name>
    <dbReference type="NCBI Taxonomy" id="9606"/>
</organismHost>
<name>NSP2_ROTHP</name>
<sequence>MAELACFCYPHLENDSYKFIPFNSLAIKCMLTAKVDKKDQDKFYNSIVYGIAPPPQFKKRYNTNDNSRGMNYETPMFNKVAILICEALNSIKVTQSDVANVLSRVVSVRHLENLVLRKENHQDVLFHSKELLLKAVLIAIGQSKEIETTATAEGGEIVFQNAAFTMWKLTYLDHKLMPILDQNFIEYKITLNEDKPISDICVKELVAELRWQYNRFAVITHGKGHYRVVKYSSVANHADRVFATYKNNAKSGNVTDFNLLDQRIIWQNWYAFTSSMKQGNTLDVCKKLLFQKMKQEKNPFKGLSTDRKMDEVSHVGI</sequence>
<proteinExistence type="inferred from homology"/>
<comment type="function">
    <text evidence="1">Participates in replication and packaging of the viral genome. Plays a crucial role, together with NSP5, in the formation of virus factories (viroplasms), which are large inclusions in the host cytoplasm where replication intermediates are assembled and viral RNA replication takes place. Displays ssRNA binding, NTPase, RNA triphosphatase (RTPase) and ATP-independent helix-unwinding activities. The unwinding activity may prepare and organize plus-strand RNAs for packaging and replication by removing interfering secondary structures. The RTPase activity plays a role in the removal of the gamma-phosphate from the rotavirus RNA minus strands of dsRNA genome segments. Participates in the selective exclusion of host proteins from stress granules (SG) and P bodies (PB). Also participates in the sequestration of these remodeled organelles in viral factories.</text>
</comment>
<comment type="cofactor">
    <cofactor evidence="1">
        <name>Mg(2+)</name>
        <dbReference type="ChEBI" id="CHEBI:18420"/>
    </cofactor>
</comment>
<comment type="subunit">
    <text evidence="1">Homooctamer. Interacts with VP1; this interaction is weak. Interacts with NSP5; this interaction leads to up-regulation of NSP5 phosphorylation and formation of viral factories. Interacts with host DCP1A, DCP1B, DDX6, EDC4 and EIF2S1/eIF2-alpha; these interactions are probably part of the sequestration of some host SGs and PBs proteins in viral factories.</text>
</comment>
<comment type="subcellular location">
    <subcellularLocation>
        <location evidence="1">Host cytoplasm</location>
    </subcellularLocation>
    <text evidence="1">Found in spherical cytoplasmic structures, called viral factories, that appear early after infection and are the site of viral replication and packaging.</text>
</comment>
<comment type="similarity">
    <text evidence="1">Belongs to the rotavirus NSP2 family.</text>
</comment>
<reference key="1">
    <citation type="journal article" date="2008" name="J. Virol.">
        <title>Group A human rotavirus genomics: evidence that gene constellations are influenced by viral protein interactions.</title>
        <authorList>
            <person name="Heiman E.M."/>
            <person name="McDonald S.M."/>
            <person name="Barro M."/>
            <person name="Taraporewala Z.F."/>
            <person name="Bar-Magen T."/>
            <person name="Patton J.T."/>
        </authorList>
    </citation>
    <scope>NUCLEOTIDE SEQUENCE [GENOMIC RNA]</scope>
</reference>
<feature type="chain" id="PRO_0000369540" description="Non-structural protein 2">
    <location>
        <begin position="1"/>
        <end position="317"/>
    </location>
</feature>
<feature type="region of interest" description="RNA-binding" evidence="1">
    <location>
        <begin position="205"/>
        <end position="241"/>
    </location>
</feature>
<feature type="active site" description="For NTPase and RTPase activities" evidence="1">
    <location>
        <position position="225"/>
    </location>
</feature>
<feature type="binding site" evidence="1">
    <location>
        <begin position="107"/>
        <end position="109"/>
    </location>
    <ligand>
        <name>ATP</name>
        <dbReference type="ChEBI" id="CHEBI:30616"/>
    </ligand>
</feature>
<feature type="binding site" evidence="1">
    <location>
        <position position="188"/>
    </location>
    <ligand>
        <name>ATP</name>
        <dbReference type="ChEBI" id="CHEBI:30616"/>
    </ligand>
</feature>
<feature type="binding site" evidence="1">
    <location>
        <begin position="221"/>
        <end position="223"/>
    </location>
    <ligand>
        <name>ATP</name>
        <dbReference type="ChEBI" id="CHEBI:30616"/>
    </ligand>
</feature>
<feature type="binding site" evidence="1">
    <location>
        <position position="227"/>
    </location>
    <ligand>
        <name>ATP</name>
        <dbReference type="ChEBI" id="CHEBI:30616"/>
    </ligand>
</feature>